<protein>
    <recommendedName>
        <fullName evidence="1">Dihydroorotate dehydrogenase (quinone)</fullName>
        <ecNumber evidence="1">1.3.5.2</ecNumber>
    </recommendedName>
    <alternativeName>
        <fullName evidence="1">DHOdehase</fullName>
        <shortName evidence="1">DHOD</shortName>
        <shortName evidence="1">DHODase</shortName>
    </alternativeName>
    <alternativeName>
        <fullName evidence="1">Dihydroorotate oxidase</fullName>
    </alternativeName>
</protein>
<dbReference type="EC" id="1.3.5.2" evidence="1"/>
<dbReference type="EMBL" id="CP000901">
    <property type="protein sequence ID" value="ABX88127.1"/>
    <property type="molecule type" value="Genomic_DNA"/>
</dbReference>
<dbReference type="RefSeq" id="WP_002211296.1">
    <property type="nucleotide sequence ID" value="NZ_CP009935.1"/>
</dbReference>
<dbReference type="SMR" id="A9R7L2"/>
<dbReference type="GeneID" id="57977211"/>
<dbReference type="KEGG" id="ypg:YpAngola_A1984"/>
<dbReference type="PATRIC" id="fig|349746.12.peg.2960"/>
<dbReference type="UniPathway" id="UPA00070">
    <property type="reaction ID" value="UER00946"/>
</dbReference>
<dbReference type="GO" id="GO:0005737">
    <property type="term" value="C:cytoplasm"/>
    <property type="evidence" value="ECO:0007669"/>
    <property type="project" value="InterPro"/>
</dbReference>
<dbReference type="GO" id="GO:0005886">
    <property type="term" value="C:plasma membrane"/>
    <property type="evidence" value="ECO:0007669"/>
    <property type="project" value="UniProtKB-SubCell"/>
</dbReference>
<dbReference type="GO" id="GO:0106430">
    <property type="term" value="F:dihydroorotate dehydrogenase (quinone) activity"/>
    <property type="evidence" value="ECO:0007669"/>
    <property type="project" value="UniProtKB-EC"/>
</dbReference>
<dbReference type="GO" id="GO:0006207">
    <property type="term" value="P:'de novo' pyrimidine nucleobase biosynthetic process"/>
    <property type="evidence" value="ECO:0007669"/>
    <property type="project" value="InterPro"/>
</dbReference>
<dbReference type="GO" id="GO:0044205">
    <property type="term" value="P:'de novo' UMP biosynthetic process"/>
    <property type="evidence" value="ECO:0007669"/>
    <property type="project" value="UniProtKB-UniRule"/>
</dbReference>
<dbReference type="CDD" id="cd04738">
    <property type="entry name" value="DHOD_2_like"/>
    <property type="match status" value="1"/>
</dbReference>
<dbReference type="FunFam" id="3.20.20.70:FF:000028">
    <property type="entry name" value="Dihydroorotate dehydrogenase (quinone)"/>
    <property type="match status" value="1"/>
</dbReference>
<dbReference type="Gene3D" id="3.20.20.70">
    <property type="entry name" value="Aldolase class I"/>
    <property type="match status" value="1"/>
</dbReference>
<dbReference type="HAMAP" id="MF_00225">
    <property type="entry name" value="DHO_dh_type2"/>
    <property type="match status" value="1"/>
</dbReference>
<dbReference type="InterPro" id="IPR013785">
    <property type="entry name" value="Aldolase_TIM"/>
</dbReference>
<dbReference type="InterPro" id="IPR050074">
    <property type="entry name" value="DHO_dehydrogenase"/>
</dbReference>
<dbReference type="InterPro" id="IPR012135">
    <property type="entry name" value="Dihydroorotate_DH_1_2"/>
</dbReference>
<dbReference type="InterPro" id="IPR005719">
    <property type="entry name" value="Dihydroorotate_DH_2"/>
</dbReference>
<dbReference type="InterPro" id="IPR005720">
    <property type="entry name" value="Dihydroorotate_DH_cat"/>
</dbReference>
<dbReference type="InterPro" id="IPR001295">
    <property type="entry name" value="Dihydroorotate_DH_CS"/>
</dbReference>
<dbReference type="NCBIfam" id="NF003644">
    <property type="entry name" value="PRK05286.1-1"/>
    <property type="match status" value="1"/>
</dbReference>
<dbReference type="NCBIfam" id="NF003645">
    <property type="entry name" value="PRK05286.1-2"/>
    <property type="match status" value="1"/>
</dbReference>
<dbReference type="NCBIfam" id="NF003646">
    <property type="entry name" value="PRK05286.1-4"/>
    <property type="match status" value="1"/>
</dbReference>
<dbReference type="NCBIfam" id="NF003652">
    <property type="entry name" value="PRK05286.2-5"/>
    <property type="match status" value="1"/>
</dbReference>
<dbReference type="NCBIfam" id="TIGR01036">
    <property type="entry name" value="pyrD_sub2"/>
    <property type="match status" value="1"/>
</dbReference>
<dbReference type="PANTHER" id="PTHR48109:SF4">
    <property type="entry name" value="DIHYDROOROTATE DEHYDROGENASE (QUINONE), MITOCHONDRIAL"/>
    <property type="match status" value="1"/>
</dbReference>
<dbReference type="PANTHER" id="PTHR48109">
    <property type="entry name" value="DIHYDROOROTATE DEHYDROGENASE (QUINONE), MITOCHONDRIAL-RELATED"/>
    <property type="match status" value="1"/>
</dbReference>
<dbReference type="Pfam" id="PF01180">
    <property type="entry name" value="DHO_dh"/>
    <property type="match status" value="1"/>
</dbReference>
<dbReference type="PIRSF" id="PIRSF000164">
    <property type="entry name" value="DHO_oxidase"/>
    <property type="match status" value="1"/>
</dbReference>
<dbReference type="SUPFAM" id="SSF51395">
    <property type="entry name" value="FMN-linked oxidoreductases"/>
    <property type="match status" value="1"/>
</dbReference>
<dbReference type="PROSITE" id="PS00911">
    <property type="entry name" value="DHODEHASE_1"/>
    <property type="match status" value="1"/>
</dbReference>
<dbReference type="PROSITE" id="PS00912">
    <property type="entry name" value="DHODEHASE_2"/>
    <property type="match status" value="1"/>
</dbReference>
<comment type="function">
    <text evidence="1">Catalyzes the conversion of dihydroorotate to orotate with quinone as electron acceptor.</text>
</comment>
<comment type="catalytic activity">
    <reaction evidence="1">
        <text>(S)-dihydroorotate + a quinone = orotate + a quinol</text>
        <dbReference type="Rhea" id="RHEA:30187"/>
        <dbReference type="ChEBI" id="CHEBI:24646"/>
        <dbReference type="ChEBI" id="CHEBI:30839"/>
        <dbReference type="ChEBI" id="CHEBI:30864"/>
        <dbReference type="ChEBI" id="CHEBI:132124"/>
        <dbReference type="EC" id="1.3.5.2"/>
    </reaction>
</comment>
<comment type="cofactor">
    <cofactor evidence="1">
        <name>FMN</name>
        <dbReference type="ChEBI" id="CHEBI:58210"/>
    </cofactor>
    <text evidence="1">Binds 1 FMN per subunit.</text>
</comment>
<comment type="pathway">
    <text evidence="1">Pyrimidine metabolism; UMP biosynthesis via de novo pathway; orotate from (S)-dihydroorotate (quinone route): step 1/1.</text>
</comment>
<comment type="subunit">
    <text evidence="1">Monomer.</text>
</comment>
<comment type="subcellular location">
    <subcellularLocation>
        <location evidence="1">Cell membrane</location>
        <topology evidence="1">Peripheral membrane protein</topology>
    </subcellularLocation>
</comment>
<comment type="similarity">
    <text evidence="1">Belongs to the dihydroorotate dehydrogenase family. Type 2 subfamily.</text>
</comment>
<organism>
    <name type="scientific">Yersinia pestis bv. Antiqua (strain Angola)</name>
    <dbReference type="NCBI Taxonomy" id="349746"/>
    <lineage>
        <taxon>Bacteria</taxon>
        <taxon>Pseudomonadati</taxon>
        <taxon>Pseudomonadota</taxon>
        <taxon>Gammaproteobacteria</taxon>
        <taxon>Enterobacterales</taxon>
        <taxon>Yersiniaceae</taxon>
        <taxon>Yersinia</taxon>
    </lineage>
</organism>
<feature type="chain" id="PRO_1000100301" description="Dihydroorotate dehydrogenase (quinone)">
    <location>
        <begin position="1"/>
        <end position="336"/>
    </location>
</feature>
<feature type="active site" description="Nucleophile" evidence="1">
    <location>
        <position position="175"/>
    </location>
</feature>
<feature type="binding site" evidence="1">
    <location>
        <begin position="62"/>
        <end position="66"/>
    </location>
    <ligand>
        <name>FMN</name>
        <dbReference type="ChEBI" id="CHEBI:58210"/>
    </ligand>
</feature>
<feature type="binding site" evidence="1">
    <location>
        <position position="66"/>
    </location>
    <ligand>
        <name>substrate</name>
    </ligand>
</feature>
<feature type="binding site" evidence="1">
    <location>
        <position position="86"/>
    </location>
    <ligand>
        <name>FMN</name>
        <dbReference type="ChEBI" id="CHEBI:58210"/>
    </ligand>
</feature>
<feature type="binding site" evidence="1">
    <location>
        <begin position="111"/>
        <end position="115"/>
    </location>
    <ligand>
        <name>substrate</name>
    </ligand>
</feature>
<feature type="binding site" evidence="1">
    <location>
        <position position="139"/>
    </location>
    <ligand>
        <name>FMN</name>
        <dbReference type="ChEBI" id="CHEBI:58210"/>
    </ligand>
</feature>
<feature type="binding site" evidence="1">
    <location>
        <position position="172"/>
    </location>
    <ligand>
        <name>FMN</name>
        <dbReference type="ChEBI" id="CHEBI:58210"/>
    </ligand>
</feature>
<feature type="binding site" evidence="1">
    <location>
        <position position="172"/>
    </location>
    <ligand>
        <name>substrate</name>
    </ligand>
</feature>
<feature type="binding site" evidence="1">
    <location>
        <position position="177"/>
    </location>
    <ligand>
        <name>substrate</name>
    </ligand>
</feature>
<feature type="binding site" evidence="1">
    <location>
        <position position="217"/>
    </location>
    <ligand>
        <name>FMN</name>
        <dbReference type="ChEBI" id="CHEBI:58210"/>
    </ligand>
</feature>
<feature type="binding site" evidence="1">
    <location>
        <position position="245"/>
    </location>
    <ligand>
        <name>FMN</name>
        <dbReference type="ChEBI" id="CHEBI:58210"/>
    </ligand>
</feature>
<feature type="binding site" evidence="1">
    <location>
        <begin position="246"/>
        <end position="247"/>
    </location>
    <ligand>
        <name>substrate</name>
    </ligand>
</feature>
<feature type="binding site" evidence="1">
    <location>
        <position position="268"/>
    </location>
    <ligand>
        <name>FMN</name>
        <dbReference type="ChEBI" id="CHEBI:58210"/>
    </ligand>
</feature>
<feature type="binding site" evidence="1">
    <location>
        <position position="297"/>
    </location>
    <ligand>
        <name>FMN</name>
        <dbReference type="ChEBI" id="CHEBI:58210"/>
    </ligand>
</feature>
<feature type="binding site" evidence="1">
    <location>
        <begin position="318"/>
        <end position="319"/>
    </location>
    <ligand>
        <name>FMN</name>
        <dbReference type="ChEBI" id="CHEBI:58210"/>
    </ligand>
</feature>
<proteinExistence type="inferred from homology"/>
<sequence>MYYPLVRKALFQLDPERAHELTFRQLKRVSGTPLEFLVRQSVPTKPVSCMGLSFKNPVGLAAGLDKDGECIDALGAMGFGFIEVGTVTPRPQVGNDKPRLFRIVEAEGLINRMGFNNHGVDNLIENVKKSHFGGILGINIGKNKDTPVEQGKEDYLICMDKIYPYAGYIAINISSPNTPGLRSLQYGEALDDLLAAIKDKQTELHQRHHKYVPVAVKIAPDLTEEELIQIADSLVRHNIDGVIATNTTLDRSLIQGLNYCEQAGGLSGRPLQLRSTEVIHRLSQELKGRLPIIGVGGIDSVTAAREKMAAGASLIQIYSGFIFRGPGLIKNIVTHI</sequence>
<name>PYRD_YERPG</name>
<gene>
    <name evidence="1" type="primary">pyrD</name>
    <name type="ordered locus">YpAngola_A1984</name>
</gene>
<keyword id="KW-1003">Cell membrane</keyword>
<keyword id="KW-0285">Flavoprotein</keyword>
<keyword id="KW-0288">FMN</keyword>
<keyword id="KW-0472">Membrane</keyword>
<keyword id="KW-0560">Oxidoreductase</keyword>
<keyword id="KW-0665">Pyrimidine biosynthesis</keyword>
<evidence type="ECO:0000255" key="1">
    <source>
        <dbReference type="HAMAP-Rule" id="MF_00225"/>
    </source>
</evidence>
<reference key="1">
    <citation type="journal article" date="2010" name="J. Bacteriol.">
        <title>Genome sequence of the deep-rooted Yersinia pestis strain Angola reveals new insights into the evolution and pangenome of the plague bacterium.</title>
        <authorList>
            <person name="Eppinger M."/>
            <person name="Worsham P.L."/>
            <person name="Nikolich M.P."/>
            <person name="Riley D.R."/>
            <person name="Sebastian Y."/>
            <person name="Mou S."/>
            <person name="Achtman M."/>
            <person name="Lindler L.E."/>
            <person name="Ravel J."/>
        </authorList>
    </citation>
    <scope>NUCLEOTIDE SEQUENCE [LARGE SCALE GENOMIC DNA]</scope>
    <source>
        <strain>Angola</strain>
    </source>
</reference>
<accession>A9R7L2</accession>